<organism>
    <name type="scientific">Xenopus tropicalis</name>
    <name type="common">Western clawed frog</name>
    <name type="synonym">Silurana tropicalis</name>
    <dbReference type="NCBI Taxonomy" id="8364"/>
    <lineage>
        <taxon>Eukaryota</taxon>
        <taxon>Metazoa</taxon>
        <taxon>Chordata</taxon>
        <taxon>Craniata</taxon>
        <taxon>Vertebrata</taxon>
        <taxon>Euteleostomi</taxon>
        <taxon>Amphibia</taxon>
        <taxon>Batrachia</taxon>
        <taxon>Anura</taxon>
        <taxon>Pipoidea</taxon>
        <taxon>Pipidae</taxon>
        <taxon>Xenopodinae</taxon>
        <taxon>Xenopus</taxon>
        <taxon>Silurana</taxon>
    </lineage>
</organism>
<accession>Q5M7K0</accession>
<feature type="chain" id="PRO_0000228083" description="Mitochondrial import inner membrane translocase subunit Tim22">
    <location>
        <begin position="1"/>
        <end position="186"/>
    </location>
</feature>
<feature type="transmembrane region" description="Helical" evidence="3">
    <location>
        <begin position="66"/>
        <end position="86"/>
    </location>
</feature>
<feature type="transmembrane region" description="Helical" evidence="3">
    <location>
        <begin position="117"/>
        <end position="135"/>
    </location>
</feature>
<feature type="transmembrane region" description="Helical" evidence="3">
    <location>
        <begin position="162"/>
        <end position="182"/>
    </location>
</feature>
<feature type="disulfide bond" evidence="2">
    <location>
        <begin position="61"/>
        <end position="133"/>
    </location>
</feature>
<feature type="disulfide bond" evidence="2">
    <location>
        <begin position="152"/>
        <end position="171"/>
    </location>
</feature>
<comment type="function">
    <text evidence="1">Essential core component of the TIM22 complex, a complex that mediates the import and insertion of multi-pass transmembrane proteins into the mitochondrial inner membrane. In the TIM22 complex, it constitutes the voltage-activated and signal-gated channel. Forms a twin-pore translocase that uses the membrane potential as external driving force in 2 voltage-dependent steps (By similarity).</text>
</comment>
<comment type="subunit">
    <text evidence="2">Core component of the TIM22 complex.</text>
</comment>
<comment type="subcellular location">
    <subcellularLocation>
        <location evidence="2">Mitochondrion inner membrane</location>
        <topology evidence="3">Multi-pass membrane protein</topology>
    </subcellularLocation>
</comment>
<comment type="similarity">
    <text evidence="4">Belongs to the Tim17/Tim22/Tim23 family.</text>
</comment>
<protein>
    <recommendedName>
        <fullName>Mitochondrial import inner membrane translocase subunit Tim22</fullName>
    </recommendedName>
</protein>
<sequence>MGGSVSPPGTGEGTLQYSLIMEHLVGDKRRPKEVIPGGLGGIPTPIKSEEQKMMERVMESCGFKAALACVGGFVLGGAFGVFTAGIDTNVGFDPKDPYRTPTAKEVLKDMGQRGMSYAKNFAIVGAMFSCTECLVESYRGKSDWKNSVISGCITGGAIGFRAGLKAGALGCGGFAAFSAVIDYYLR</sequence>
<reference key="1">
    <citation type="submission" date="2004-12" db="EMBL/GenBank/DDBJ databases">
        <authorList>
            <consortium name="NIH - Xenopus Gene Collection (XGC) project"/>
        </authorList>
    </citation>
    <scope>NUCLEOTIDE SEQUENCE [LARGE SCALE MRNA]</scope>
    <source>
        <tissue>Embryo</tissue>
    </source>
</reference>
<proteinExistence type="evidence at transcript level"/>
<gene>
    <name type="primary">timm22</name>
    <name type="synonym">tim22</name>
</gene>
<dbReference type="EMBL" id="BC088600">
    <property type="protein sequence ID" value="AAH88600.1"/>
    <property type="molecule type" value="mRNA"/>
</dbReference>
<dbReference type="RefSeq" id="NP_001011397.1">
    <property type="nucleotide sequence ID" value="NM_001011397.1"/>
</dbReference>
<dbReference type="SMR" id="Q5M7K0"/>
<dbReference type="FunCoup" id="Q5M7K0">
    <property type="interactions" value="1557"/>
</dbReference>
<dbReference type="STRING" id="8364.ENSXETP00000037599"/>
<dbReference type="PaxDb" id="8364-ENSXETP00000041721"/>
<dbReference type="GeneID" id="496870"/>
<dbReference type="KEGG" id="xtr:496870"/>
<dbReference type="AGR" id="Xenbase:XB-GENE-5754351"/>
<dbReference type="CTD" id="29928"/>
<dbReference type="Xenbase" id="XB-GENE-5754351">
    <property type="gene designation" value="timm22"/>
</dbReference>
<dbReference type="eggNOG" id="KOG3225">
    <property type="taxonomic scope" value="Eukaryota"/>
</dbReference>
<dbReference type="HOGENOM" id="CLU_091077_0_0_1"/>
<dbReference type="InParanoid" id="Q5M7K0"/>
<dbReference type="OMA" id="VNPNMAD"/>
<dbReference type="OrthoDB" id="75343at2759"/>
<dbReference type="PhylomeDB" id="Q5M7K0"/>
<dbReference type="Reactome" id="R-XTR-1268020">
    <property type="pathway name" value="Mitochondrial protein import"/>
</dbReference>
<dbReference type="Proteomes" id="UP000008143">
    <property type="component" value="Chromosome 2"/>
</dbReference>
<dbReference type="Bgee" id="ENSXETG00000019259">
    <property type="expression patterns" value="Expressed in egg cell and 12 other cell types or tissues"/>
</dbReference>
<dbReference type="ExpressionAtlas" id="Q5M7K0">
    <property type="expression patterns" value="differential"/>
</dbReference>
<dbReference type="GO" id="GO:0042721">
    <property type="term" value="C:TIM22 mitochondrial import inner membrane insertion complex"/>
    <property type="evidence" value="ECO:0000250"/>
    <property type="project" value="UniProtKB"/>
</dbReference>
<dbReference type="GO" id="GO:0045039">
    <property type="term" value="P:protein insertion into mitochondrial inner membrane"/>
    <property type="evidence" value="ECO:0000250"/>
    <property type="project" value="UniProtKB"/>
</dbReference>
<dbReference type="InterPro" id="IPR039175">
    <property type="entry name" value="TIM22"/>
</dbReference>
<dbReference type="PANTHER" id="PTHR14110">
    <property type="entry name" value="MITOCHONDRIAL IMPORT INNER MEMBRANE TRANSLOCASE SUBUNIT TIM22"/>
    <property type="match status" value="1"/>
</dbReference>
<dbReference type="PANTHER" id="PTHR14110:SF0">
    <property type="entry name" value="MITOCHONDRIAL IMPORT INNER MEMBRANE TRANSLOCASE SUBUNIT TIM22"/>
    <property type="match status" value="1"/>
</dbReference>
<dbReference type="Pfam" id="PF02466">
    <property type="entry name" value="Tim17"/>
    <property type="match status" value="1"/>
</dbReference>
<keyword id="KW-1015">Disulfide bond</keyword>
<keyword id="KW-0472">Membrane</keyword>
<keyword id="KW-0496">Mitochondrion</keyword>
<keyword id="KW-0999">Mitochondrion inner membrane</keyword>
<keyword id="KW-0653">Protein transport</keyword>
<keyword id="KW-1185">Reference proteome</keyword>
<keyword id="KW-0811">Translocation</keyword>
<keyword id="KW-0812">Transmembrane</keyword>
<keyword id="KW-1133">Transmembrane helix</keyword>
<keyword id="KW-0813">Transport</keyword>
<name>TIM22_XENTR</name>
<evidence type="ECO:0000250" key="1">
    <source>
        <dbReference type="UniProtKB" id="Q12328"/>
    </source>
</evidence>
<evidence type="ECO:0000250" key="2">
    <source>
        <dbReference type="UniProtKB" id="Q9Y584"/>
    </source>
</evidence>
<evidence type="ECO:0000255" key="3"/>
<evidence type="ECO:0000305" key="4"/>